<keyword id="KW-0903">Direct protein sequencing</keyword>
<keyword id="KW-1185">Reference proteome</keyword>
<keyword id="KW-0677">Repeat</keyword>
<evidence type="ECO:0000255" key="1">
    <source>
        <dbReference type="PROSITE-ProRule" id="PRU00229"/>
    </source>
</evidence>
<evidence type="ECO:0000255" key="2">
    <source>
        <dbReference type="PROSITE-ProRule" id="PRU01118"/>
    </source>
</evidence>
<evidence type="ECO:0000256" key="3">
    <source>
        <dbReference type="SAM" id="MobiDB-lite"/>
    </source>
</evidence>
<organism>
    <name type="scientific">Deinococcus radiodurans (strain ATCC 13939 / DSM 20539 / JCM 16871 / CCUG 27074 / LMG 4051 / NBRC 15346 / NCIMB 9279 / VKM B-1422 / R1)</name>
    <dbReference type="NCBI Taxonomy" id="243230"/>
    <lineage>
        <taxon>Bacteria</taxon>
        <taxon>Thermotogati</taxon>
        <taxon>Deinococcota</taxon>
        <taxon>Deinococci</taxon>
        <taxon>Deinococcales</taxon>
        <taxon>Deinococcaceae</taxon>
        <taxon>Deinococcus</taxon>
    </lineage>
</organism>
<reference key="1">
    <citation type="journal article" date="1999" name="Science">
        <title>Genome sequence of the radioresistant bacterium Deinococcus radiodurans R1.</title>
        <authorList>
            <person name="White O."/>
            <person name="Eisen J.A."/>
            <person name="Heidelberg J.F."/>
            <person name="Hickey E.K."/>
            <person name="Peterson J.D."/>
            <person name="Dodson R.J."/>
            <person name="Haft D.H."/>
            <person name="Gwinn M.L."/>
            <person name="Nelson W.C."/>
            <person name="Richardson D.L."/>
            <person name="Moffat K.S."/>
            <person name="Qin H."/>
            <person name="Jiang L."/>
            <person name="Pamphile W."/>
            <person name="Crosby M."/>
            <person name="Shen M."/>
            <person name="Vamathevan J.J."/>
            <person name="Lam P."/>
            <person name="McDonald L.A."/>
            <person name="Utterback T.R."/>
            <person name="Zalewski C."/>
            <person name="Makarova K.S."/>
            <person name="Aravind L."/>
            <person name="Daly M.J."/>
            <person name="Minton K.W."/>
            <person name="Fleischmann R.D."/>
            <person name="Ketchum K.A."/>
            <person name="Nelson K.E."/>
            <person name="Salzberg S.L."/>
            <person name="Smith H.O."/>
            <person name="Venter J.C."/>
            <person name="Fraser C.M."/>
        </authorList>
    </citation>
    <scope>NUCLEOTIDE SEQUENCE [LARGE SCALE GENOMIC DNA]</scope>
    <source>
        <strain>ATCC 13939 / DSM 20539 / JCM 16871 / CCUG 27074 / LMG 4051 / NBRC 15346 / NCIMB 9279 / VKM B-1422 / R1</strain>
    </source>
</reference>
<reference key="2">
    <citation type="journal article" date="2004" name="Biochem. Biophys. Res. Commun.">
        <title>Protein recycling is a major component of post-irradiation recovery in Deinococcus radiodurans strain R1.</title>
        <authorList>
            <person name="Joshi B.S."/>
            <person name="Schmid R."/>
            <person name="Altendorf K."/>
            <person name="Apte S.K."/>
        </authorList>
    </citation>
    <scope>PROTEIN SEQUENCE OF 1-19</scope>
    <source>
        <strain>ATCC 13939 / DSM 20539 / JCM 16871 / CCUG 27074 / LMG 4051 / NBRC 15346 / NCIMB 9279 / VKM B-1422 / R1</strain>
    </source>
</reference>
<gene>
    <name type="ordered locus">DR_0888</name>
</gene>
<protein>
    <recommendedName>
        <fullName>Uncharacterized protein DR_0888</fullName>
    </recommendedName>
</protein>
<proteinExistence type="evidence at protein level"/>
<name>Y888_DEIRA</name>
<feature type="chain" id="PRO_0000221642" description="Uncharacterized protein DR_0888">
    <location>
        <begin position="1"/>
        <end position="253"/>
    </location>
</feature>
<feature type="domain" description="BON 1" evidence="1">
    <location>
        <begin position="4"/>
        <end position="73"/>
    </location>
</feature>
<feature type="domain" description="BON 2" evidence="1">
    <location>
        <begin position="119"/>
        <end position="188"/>
    </location>
</feature>
<feature type="domain" description="LysM" evidence="2">
    <location>
        <begin position="204"/>
        <end position="251"/>
    </location>
</feature>
<feature type="region of interest" description="Disordered" evidence="3">
    <location>
        <begin position="79"/>
        <end position="105"/>
    </location>
</feature>
<feature type="compositionally biased region" description="Low complexity" evidence="3">
    <location>
        <begin position="79"/>
        <end position="93"/>
    </location>
</feature>
<dbReference type="EMBL" id="AE000513">
    <property type="protein sequence ID" value="AAF10467.1"/>
    <property type="molecule type" value="Genomic_DNA"/>
</dbReference>
<dbReference type="PIR" id="E75465">
    <property type="entry name" value="E75465"/>
</dbReference>
<dbReference type="RefSeq" id="NP_294612.1">
    <property type="nucleotide sequence ID" value="NC_001263.1"/>
</dbReference>
<dbReference type="RefSeq" id="WP_010887533.1">
    <property type="nucleotide sequence ID" value="NC_001263.1"/>
</dbReference>
<dbReference type="SMR" id="Q9RVY3"/>
<dbReference type="STRING" id="243230.DR_0888"/>
<dbReference type="CAZy" id="CBM50">
    <property type="family name" value="Carbohydrate-Binding Module Family 50"/>
</dbReference>
<dbReference type="PaxDb" id="243230-DR_0888"/>
<dbReference type="EnsemblBacteria" id="AAF10467">
    <property type="protein sequence ID" value="AAF10467"/>
    <property type="gene ID" value="DR_0888"/>
</dbReference>
<dbReference type="GeneID" id="69517133"/>
<dbReference type="KEGG" id="dra:DR_0888"/>
<dbReference type="PATRIC" id="fig|243230.17.peg.1074"/>
<dbReference type="eggNOG" id="COG1652">
    <property type="taxonomic scope" value="Bacteria"/>
</dbReference>
<dbReference type="eggNOG" id="COG2823">
    <property type="taxonomic scope" value="Bacteria"/>
</dbReference>
<dbReference type="HOGENOM" id="CLU_1127620_0_0_0"/>
<dbReference type="InParanoid" id="Q9RVY3"/>
<dbReference type="OrthoDB" id="9800780at2"/>
<dbReference type="Proteomes" id="UP000002524">
    <property type="component" value="Chromosome 1"/>
</dbReference>
<dbReference type="CDD" id="cd00118">
    <property type="entry name" value="LysM"/>
    <property type="match status" value="1"/>
</dbReference>
<dbReference type="Gene3D" id="3.30.1340.30">
    <property type="match status" value="1"/>
</dbReference>
<dbReference type="Gene3D" id="3.10.350.10">
    <property type="entry name" value="LysM domain"/>
    <property type="match status" value="1"/>
</dbReference>
<dbReference type="InterPro" id="IPR007055">
    <property type="entry name" value="BON_dom"/>
</dbReference>
<dbReference type="InterPro" id="IPR051686">
    <property type="entry name" value="Lipoprotein_DolP"/>
</dbReference>
<dbReference type="InterPro" id="IPR018392">
    <property type="entry name" value="LysM_dom"/>
</dbReference>
<dbReference type="InterPro" id="IPR036779">
    <property type="entry name" value="LysM_dom_sf"/>
</dbReference>
<dbReference type="InterPro" id="IPR014004">
    <property type="entry name" value="Transpt-assoc_nodulatn_dom_bac"/>
</dbReference>
<dbReference type="PANTHER" id="PTHR34606">
    <property type="entry name" value="BON DOMAIN-CONTAINING PROTEIN"/>
    <property type="match status" value="1"/>
</dbReference>
<dbReference type="PANTHER" id="PTHR34606:SF15">
    <property type="entry name" value="BON DOMAIN-CONTAINING PROTEIN"/>
    <property type="match status" value="1"/>
</dbReference>
<dbReference type="Pfam" id="PF04972">
    <property type="entry name" value="BON"/>
    <property type="match status" value="2"/>
</dbReference>
<dbReference type="Pfam" id="PF01476">
    <property type="entry name" value="LysM"/>
    <property type="match status" value="1"/>
</dbReference>
<dbReference type="SMART" id="SM00749">
    <property type="entry name" value="BON"/>
    <property type="match status" value="2"/>
</dbReference>
<dbReference type="SMART" id="SM00257">
    <property type="entry name" value="LysM"/>
    <property type="match status" value="1"/>
</dbReference>
<dbReference type="SUPFAM" id="SSF54106">
    <property type="entry name" value="LysM domain"/>
    <property type="match status" value="1"/>
</dbReference>
<dbReference type="PROSITE" id="PS50914">
    <property type="entry name" value="BON"/>
    <property type="match status" value="2"/>
</dbReference>
<dbReference type="PROSITE" id="PS51782">
    <property type="entry name" value="LYSM"/>
    <property type="match status" value="1"/>
</dbReference>
<accession>Q9RVY3</accession>
<sequence length="253" mass="26571">MWPFGKSTADRVKDAFKANPVLAPLGLEVQESRGTVKVTGEVARQSQIGLINAVAGGINGVKNIDVSGVTVLQQASAPAAQTAPTTPAQTSPSVQDSPSTPVQMPDIVQQGAGDVEIEDTSRIAKAVLSAIRGNGELANNPIDVLQSGNSVILRGAVDSDHELRLAEQLARGVQGVSGVDISGLRVAQGAKELAKDKDEDTGDTVYTVKPGDSLSKIAEHYYGDQMEYKKIAHYNNISNPDLIQPGQKLRIPG</sequence>